<evidence type="ECO:0000250" key="1"/>
<evidence type="ECO:0000255" key="2"/>
<evidence type="ECO:0000269" key="3">
    <source>
    </source>
</evidence>
<evidence type="ECO:0000269" key="4">
    <source>
    </source>
</evidence>
<evidence type="ECO:0000269" key="5">
    <source>
    </source>
</evidence>
<evidence type="ECO:0000269" key="6">
    <source>
    </source>
</evidence>
<evidence type="ECO:0000303" key="7">
    <source>
    </source>
</evidence>
<evidence type="ECO:0000305" key="8"/>
<evidence type="ECO:0000305" key="9">
    <source>
    </source>
</evidence>
<evidence type="ECO:0000305" key="10">
    <source>
    </source>
</evidence>
<evidence type="ECO:0000305" key="11">
    <source>
    </source>
</evidence>
<comment type="function">
    <molecule>Toxin CSTX-9</molecule>
    <text evidence="1 3 5 6">Synergistic toxin that induces or increases a cytolytic effect when combined with CSTX-1 (AC P81694) or CSTX-13 (AC P83919). Potassium ions and M-ctenitoxin-Cs1a (AC P83619) have also an effect on its activity. When alone, has no insecticidal activity.</text>
</comment>
<comment type="subunit">
    <text evidence="6 8">Monomer (Probable). Interacts with CSTX-13 (AC P83919) (Kd=370 nM), but does not interact with CSTX-1 (AC P81694) (PubMed:32290562).</text>
</comment>
<comment type="subcellular location">
    <subcellularLocation>
        <location evidence="3">Secreted</location>
    </subcellularLocation>
    <subcellularLocation>
        <location evidence="11">Target cell membrane</location>
    </subcellularLocation>
</comment>
<comment type="tissue specificity">
    <text evidence="9">Expressed by the venom gland.</text>
</comment>
<comment type="domain">
    <text evidence="8">The presence of a 'disulfide through disulfide knot' structurally defines this protein as a knottin.</text>
</comment>
<comment type="mass spectrometry" mass="7529.75" error="0.32" method="Electrospray" evidence="3">
    <molecule>Toxin CSTX-9</molecule>
</comment>
<comment type="mass spectrometry" mass="7383.04" method="Electrospray" evidence="4">
    <molecule>Toxin CSTX-7</molecule>
</comment>
<comment type="toxic dose">
    <text>LD(50) is 10.6 pmol on Drosophila.</text>
</comment>
<comment type="toxic dose">
    <text>LD(50) is 3.12 pmol/mg on Drosophila.</text>
</comment>
<comment type="toxic dose">
    <molecule>Toxin CSTX-9</molecule>
    <text evidence="6">LD(50) is 45.54 pmol/mg when intrathoracically injected into drosophila.</text>
</comment>
<comment type="toxic dose">
    <molecule>Toxin CSTX-9</molecule>
    <text evidence="6">LD(50) is 0.432 pmol/mg when intrathoracically co-injected with CSTX-1 (AC P81694) into drosophila.</text>
</comment>
<comment type="toxic dose">
    <molecule>Toxin CSTX-9</molecule>
    <text evidence="6">LD(50) is 0.082 pmol/mg when intrathoracically co-injected with CSTX-13 (AC P83919) into drosophila.</text>
</comment>
<comment type="similarity">
    <text evidence="8">Belongs to the neurotoxin 19 (CSTX) family.</text>
</comment>
<sequence length="115" mass="12845">MKVLVICAVLFLAIFSNSSAETEDDFLEDESFEADDVIPFLAREQVRKDDKNCIPKHHECTNDKKNCCKKGLTKMKCKCFTVADAKGATSERCACDSSLLQKFGFTGLHIIKGLF</sequence>
<feature type="signal peptide" evidence="2">
    <location>
        <begin position="1"/>
        <end position="20"/>
    </location>
</feature>
<feature type="propeptide" id="PRO_0000452333" evidence="9 10">
    <location>
        <begin position="21"/>
        <end position="47"/>
    </location>
</feature>
<feature type="chain" id="PRO_0000087672" description="Toxin CSTX-9" evidence="3">
    <location>
        <begin position="48"/>
        <end position="115"/>
    </location>
</feature>
<feature type="chain" id="PRO_0000391351" description="Toxin CSTX-7" evidence="4">
    <location>
        <begin position="48"/>
        <end position="114"/>
    </location>
</feature>
<feature type="disulfide bond" evidence="3">
    <location>
        <begin position="53"/>
        <end position="68"/>
    </location>
</feature>
<feature type="disulfide bond" evidence="3">
    <location>
        <begin position="60"/>
        <end position="77"/>
    </location>
</feature>
<feature type="disulfide bond" evidence="3">
    <location>
        <begin position="67"/>
        <end position="95"/>
    </location>
</feature>
<feature type="disulfide bond" evidence="3">
    <location>
        <begin position="79"/>
        <end position="93"/>
    </location>
</feature>
<proteinExistence type="evidence at protein level"/>
<name>TXC9A_CUPSA</name>
<accession>P58604</accession>
<accession>A0A4Y5UGK1</accession>
<keyword id="KW-0108">Calcium channel impairing toxin</keyword>
<keyword id="KW-0903">Direct protein sequencing</keyword>
<keyword id="KW-1015">Disulfide bond</keyword>
<keyword id="KW-0872">Ion channel impairing toxin</keyword>
<keyword id="KW-0960">Knottin</keyword>
<keyword id="KW-0472">Membrane</keyword>
<keyword id="KW-0528">Neurotoxin</keyword>
<keyword id="KW-0964">Secreted</keyword>
<keyword id="KW-0732">Signal</keyword>
<keyword id="KW-1052">Target cell membrane</keyword>
<keyword id="KW-1053">Target membrane</keyword>
<keyword id="KW-0800">Toxin</keyword>
<keyword id="KW-1218">Voltage-gated calcium channel impairing toxin</keyword>
<reference key="1">
    <citation type="journal article" date="2019" name="Toxins">
        <title>The dual prey-inactivation strategy of spiders-in-depth venomic analysis of Cupiennius salei.</title>
        <authorList>
            <person name="Kuhn-Nentwig L."/>
            <person name="Langenegger N."/>
            <person name="Heller M."/>
            <person name="Koua D."/>
            <person name="Nentwig W."/>
        </authorList>
    </citation>
    <scope>NUCLEOTIDE SEQUENCE [MRNA]</scope>
    <source>
        <tissue>Venom gland</tissue>
    </source>
</reference>
<reference key="2">
    <citation type="journal article" date="2001" name="Cell. Mol. Life Sci.">
        <title>CSTX-9, a toxic peptide from the spider Cupiennius salei: amino acid sequence, disulphide bridge pattern and comparison with other spider toxins containing the cystine knot structure.</title>
        <authorList>
            <person name="Schaller J."/>
            <person name="Kaempfer U."/>
            <person name="Schuerch S."/>
            <person name="Kuhn-Nentwig L."/>
            <person name="Haeberli S."/>
            <person name="Nentwig W."/>
        </authorList>
    </citation>
    <scope>PROTEIN SEQUENCE OF 48-115</scope>
    <scope>DISULFIDE BONDS</scope>
    <scope>FUNCTION</scope>
    <scope>TOXIC DOSE</scope>
    <scope>MASS SPECTROMETRY</scope>
    <scope>SUBCELLULAR LOCATION</scope>
    <source>
        <tissue>Venom</tissue>
    </source>
</reference>
<reference key="3">
    <citation type="journal article" date="2004" name="Toxicon">
        <title>Biochemistry, toxicology and ecology of the venom of the spider Cupiennius salei (Ctenidae).</title>
        <authorList>
            <person name="Kuhn-Nentwig L."/>
            <person name="Schaller J."/>
            <person name="Nentwig W."/>
        </authorList>
    </citation>
    <scope>PROTEIN SEQUENCE OF 48-114</scope>
    <scope>REVIEW</scope>
</reference>
<reference key="4">
    <citation type="journal article" date="2005" name="J. Exp. Biol.">
        <title>Spider venom: enhancement of venom efficacy mediated by different synergistic strategies in Cupiennius salei.</title>
        <authorList>
            <person name="Wullschleger B."/>
            <person name="Nentwig W."/>
            <person name="Kuhn-Nentwig L."/>
        </authorList>
    </citation>
    <scope>FUNCTION IN SYNERGY WITH OTHER TOXINS</scope>
    <scope>TOXIC DOSE</scope>
</reference>
<reference key="5">
    <citation type="journal article" date="2020" name="Toxins">
        <title>Neurotoxin merging: a strategy deployed by the venom of the spider cupiennius salei to potentiate toxicity on insects.</title>
        <authorList>
            <person name="Clemencon B."/>
            <person name="Kuhn-Nentwig L."/>
            <person name="Langenegger N."/>
            <person name="Kopp L."/>
            <person name="Peigneur S."/>
            <person name="Tytgat J."/>
            <person name="Nentwig W."/>
            <person name="Luescher B.P."/>
        </authorList>
    </citation>
    <scope>FUNCTION</scope>
    <scope>TOXIC DOSE</scope>
    <scope>SUBUNIT</scope>
    <scope>3D-STRUCTURE MODELING</scope>
    <source>
        <tissue>Venom</tissue>
    </source>
</reference>
<organism>
    <name type="scientific">Cupiennius salei</name>
    <name type="common">American wandering spider</name>
    <dbReference type="NCBI Taxonomy" id="6928"/>
    <lineage>
        <taxon>Eukaryota</taxon>
        <taxon>Metazoa</taxon>
        <taxon>Ecdysozoa</taxon>
        <taxon>Arthropoda</taxon>
        <taxon>Chelicerata</taxon>
        <taxon>Arachnida</taxon>
        <taxon>Araneae</taxon>
        <taxon>Araneomorphae</taxon>
        <taxon>Entelegynae</taxon>
        <taxon>Lycosoidea</taxon>
        <taxon>Ctenidae</taxon>
        <taxon>Cupiennius</taxon>
    </lineage>
</organism>
<protein>
    <recommendedName>
        <fullName>Toxin CSTX-9</fullName>
    </recommendedName>
    <alternativeName>
        <fullName evidence="7">Toxin CsTx-9a</fullName>
    </alternativeName>
    <alternativeName>
        <fullName>U1-ctenitoxin-Cs1a</fullName>
        <shortName>U1-CNTX-Cs1a</shortName>
    </alternativeName>
    <component>
        <recommendedName>
            <fullName>Toxin CSTX-7</fullName>
        </recommendedName>
    </component>
</protein>
<dbReference type="EMBL" id="MH754564">
    <property type="protein sequence ID" value="QDC23099.1"/>
    <property type="molecule type" value="mRNA"/>
</dbReference>
<dbReference type="SMR" id="P58604"/>
<dbReference type="TCDB" id="8.B.19.2.1">
    <property type="family name" value="the sea anemone k+ channel blocker toxin, bcstx3 (bcstx3) family"/>
</dbReference>
<dbReference type="ArachnoServer" id="AS000299">
    <property type="toxin name" value="U1-ctenitoxin-Cs1a"/>
</dbReference>
<dbReference type="GO" id="GO:0005576">
    <property type="term" value="C:extracellular region"/>
    <property type="evidence" value="ECO:0007669"/>
    <property type="project" value="UniProtKB-SubCell"/>
</dbReference>
<dbReference type="GO" id="GO:0016020">
    <property type="term" value="C:membrane"/>
    <property type="evidence" value="ECO:0007669"/>
    <property type="project" value="UniProtKB-KW"/>
</dbReference>
<dbReference type="GO" id="GO:0044218">
    <property type="term" value="C:other organism cell membrane"/>
    <property type="evidence" value="ECO:0007669"/>
    <property type="project" value="UniProtKB-KW"/>
</dbReference>
<dbReference type="GO" id="GO:0005246">
    <property type="term" value="F:calcium channel regulator activity"/>
    <property type="evidence" value="ECO:0007669"/>
    <property type="project" value="UniProtKB-KW"/>
</dbReference>
<dbReference type="GO" id="GO:0090729">
    <property type="term" value="F:toxin activity"/>
    <property type="evidence" value="ECO:0007669"/>
    <property type="project" value="UniProtKB-KW"/>
</dbReference>
<dbReference type="InterPro" id="IPR019553">
    <property type="entry name" value="Spider_toxin_CSTX_knottin"/>
</dbReference>
<dbReference type="InterPro" id="IPR011142">
    <property type="entry name" value="Spider_toxin_CSTX_Knottin_CS"/>
</dbReference>
<dbReference type="Pfam" id="PF10530">
    <property type="entry name" value="Toxin_35"/>
    <property type="match status" value="1"/>
</dbReference>
<dbReference type="PROSITE" id="PS60029">
    <property type="entry name" value="SPIDER_CSTX"/>
    <property type="match status" value="1"/>
</dbReference>